<accession>Q8G089</accession>
<accession>G0KAD6</accession>
<feature type="chain" id="PRO_0000347087" description="Large ribosomal subunit protein uL30">
    <location>
        <begin position="1"/>
        <end position="65"/>
    </location>
</feature>
<organism>
    <name type="scientific">Brucella suis biovar 1 (strain 1330)</name>
    <dbReference type="NCBI Taxonomy" id="204722"/>
    <lineage>
        <taxon>Bacteria</taxon>
        <taxon>Pseudomonadati</taxon>
        <taxon>Pseudomonadota</taxon>
        <taxon>Alphaproteobacteria</taxon>
        <taxon>Hyphomicrobiales</taxon>
        <taxon>Brucellaceae</taxon>
        <taxon>Brucella/Ochrobactrum group</taxon>
        <taxon>Brucella</taxon>
    </lineage>
</organism>
<gene>
    <name evidence="1" type="primary">rpmD</name>
    <name type="ordered locus">BR1215</name>
    <name type="ordered locus">BS1330_I1211</name>
</gene>
<proteinExistence type="inferred from homology"/>
<keyword id="KW-0687">Ribonucleoprotein</keyword>
<keyword id="KW-0689">Ribosomal protein</keyword>
<dbReference type="EMBL" id="AE014291">
    <property type="protein sequence ID" value="AAN30134.1"/>
    <property type="molecule type" value="Genomic_DNA"/>
</dbReference>
<dbReference type="EMBL" id="CP002997">
    <property type="protein sequence ID" value="AEM18552.1"/>
    <property type="molecule type" value="Genomic_DNA"/>
</dbReference>
<dbReference type="PIR" id="AI3348">
    <property type="entry name" value="AI3348"/>
</dbReference>
<dbReference type="RefSeq" id="WP_002967737.1">
    <property type="nucleotide sequence ID" value="NZ_KN046804.1"/>
</dbReference>
<dbReference type="SMR" id="Q8G089"/>
<dbReference type="GeneID" id="97533542"/>
<dbReference type="KEGG" id="bms:BR1215"/>
<dbReference type="KEGG" id="bsi:BS1330_I1211"/>
<dbReference type="PATRIC" id="fig|204722.21.peg.2261"/>
<dbReference type="HOGENOM" id="CLU_131047_1_2_5"/>
<dbReference type="Proteomes" id="UP000007104">
    <property type="component" value="Chromosome I"/>
</dbReference>
<dbReference type="GO" id="GO:0022625">
    <property type="term" value="C:cytosolic large ribosomal subunit"/>
    <property type="evidence" value="ECO:0007669"/>
    <property type="project" value="TreeGrafter"/>
</dbReference>
<dbReference type="GO" id="GO:0003735">
    <property type="term" value="F:structural constituent of ribosome"/>
    <property type="evidence" value="ECO:0007669"/>
    <property type="project" value="InterPro"/>
</dbReference>
<dbReference type="GO" id="GO:0006412">
    <property type="term" value="P:translation"/>
    <property type="evidence" value="ECO:0007669"/>
    <property type="project" value="UniProtKB-UniRule"/>
</dbReference>
<dbReference type="CDD" id="cd01658">
    <property type="entry name" value="Ribosomal_L30"/>
    <property type="match status" value="1"/>
</dbReference>
<dbReference type="Gene3D" id="3.30.1390.20">
    <property type="entry name" value="Ribosomal protein L30, ferredoxin-like fold domain"/>
    <property type="match status" value="1"/>
</dbReference>
<dbReference type="HAMAP" id="MF_01371_B">
    <property type="entry name" value="Ribosomal_uL30_B"/>
    <property type="match status" value="1"/>
</dbReference>
<dbReference type="InterPro" id="IPR036919">
    <property type="entry name" value="Ribo_uL30_ferredoxin-like_sf"/>
</dbReference>
<dbReference type="InterPro" id="IPR005996">
    <property type="entry name" value="Ribosomal_uL30_bac-type"/>
</dbReference>
<dbReference type="InterPro" id="IPR016082">
    <property type="entry name" value="Ribosomal_uL30_ferredoxin-like"/>
</dbReference>
<dbReference type="NCBIfam" id="TIGR01308">
    <property type="entry name" value="rpmD_bact"/>
    <property type="match status" value="1"/>
</dbReference>
<dbReference type="PANTHER" id="PTHR15892:SF2">
    <property type="entry name" value="LARGE RIBOSOMAL SUBUNIT PROTEIN UL30M"/>
    <property type="match status" value="1"/>
</dbReference>
<dbReference type="PANTHER" id="PTHR15892">
    <property type="entry name" value="MITOCHONDRIAL RIBOSOMAL PROTEIN L30"/>
    <property type="match status" value="1"/>
</dbReference>
<dbReference type="Pfam" id="PF00327">
    <property type="entry name" value="Ribosomal_L30"/>
    <property type="match status" value="1"/>
</dbReference>
<dbReference type="PIRSF" id="PIRSF002211">
    <property type="entry name" value="Ribosomal_L30_bac-type"/>
    <property type="match status" value="1"/>
</dbReference>
<dbReference type="SUPFAM" id="SSF55129">
    <property type="entry name" value="Ribosomal protein L30p/L7e"/>
    <property type="match status" value="1"/>
</dbReference>
<protein>
    <recommendedName>
        <fullName evidence="1">Large ribosomal subunit protein uL30</fullName>
    </recommendedName>
    <alternativeName>
        <fullName evidence="2">50S ribosomal protein L30</fullName>
    </alternativeName>
</protein>
<reference key="1">
    <citation type="journal article" date="2002" name="Proc. Natl. Acad. Sci. U.S.A.">
        <title>The Brucella suis genome reveals fundamental similarities between animal and plant pathogens and symbionts.</title>
        <authorList>
            <person name="Paulsen I.T."/>
            <person name="Seshadri R."/>
            <person name="Nelson K.E."/>
            <person name="Eisen J.A."/>
            <person name="Heidelberg J.F."/>
            <person name="Read T.D."/>
            <person name="Dodson R.J."/>
            <person name="Umayam L.A."/>
            <person name="Brinkac L.M."/>
            <person name="Beanan M.J."/>
            <person name="Daugherty S.C."/>
            <person name="DeBoy R.T."/>
            <person name="Durkin A.S."/>
            <person name="Kolonay J.F."/>
            <person name="Madupu R."/>
            <person name="Nelson W.C."/>
            <person name="Ayodeji B."/>
            <person name="Kraul M."/>
            <person name="Shetty J."/>
            <person name="Malek J.A."/>
            <person name="Van Aken S.E."/>
            <person name="Riedmuller S."/>
            <person name="Tettelin H."/>
            <person name="Gill S.R."/>
            <person name="White O."/>
            <person name="Salzberg S.L."/>
            <person name="Hoover D.L."/>
            <person name="Lindler L.E."/>
            <person name="Halling S.M."/>
            <person name="Boyle S.M."/>
            <person name="Fraser C.M."/>
        </authorList>
    </citation>
    <scope>NUCLEOTIDE SEQUENCE [LARGE SCALE GENOMIC DNA]</scope>
    <source>
        <strain>1330</strain>
    </source>
</reference>
<reference key="2">
    <citation type="journal article" date="2011" name="J. Bacteriol.">
        <title>Revised genome sequence of Brucella suis 1330.</title>
        <authorList>
            <person name="Tae H."/>
            <person name="Shallom S."/>
            <person name="Settlage R."/>
            <person name="Preston D."/>
            <person name="Adams L.G."/>
            <person name="Garner H.R."/>
        </authorList>
    </citation>
    <scope>NUCLEOTIDE SEQUENCE [LARGE SCALE GENOMIC DNA]</scope>
    <source>
        <strain>1330</strain>
    </source>
</reference>
<sequence length="65" mass="7172">MAEKKGKTVTVEQIGSPIRRPAEQRATLIGLGLNKMHRRSTLEDTPAVRGMIAKLPHLVRVVDEA</sequence>
<name>RL30_BRUSU</name>
<evidence type="ECO:0000255" key="1">
    <source>
        <dbReference type="HAMAP-Rule" id="MF_01371"/>
    </source>
</evidence>
<evidence type="ECO:0000305" key="2"/>
<comment type="subunit">
    <text evidence="1">Part of the 50S ribosomal subunit.</text>
</comment>
<comment type="similarity">
    <text evidence="1">Belongs to the universal ribosomal protein uL30 family.</text>
</comment>